<organism>
    <name type="scientific">Aspergillus fumigatus (strain ATCC MYA-4609 / CBS 101355 / FGSC A1100 / Af293)</name>
    <name type="common">Neosartorya fumigata</name>
    <dbReference type="NCBI Taxonomy" id="330879"/>
    <lineage>
        <taxon>Eukaryota</taxon>
        <taxon>Fungi</taxon>
        <taxon>Dikarya</taxon>
        <taxon>Ascomycota</taxon>
        <taxon>Pezizomycotina</taxon>
        <taxon>Eurotiomycetes</taxon>
        <taxon>Eurotiomycetidae</taxon>
        <taxon>Eurotiales</taxon>
        <taxon>Aspergillaceae</taxon>
        <taxon>Aspergillus</taxon>
        <taxon>Aspergillus subgen. Fumigati</taxon>
    </lineage>
</organism>
<keyword id="KW-0072">Autophagy</keyword>
<keyword id="KW-1017">Isopeptide bond</keyword>
<keyword id="KW-0472">Membrane</keyword>
<keyword id="KW-0653">Protein transport</keyword>
<keyword id="KW-1185">Reference proteome</keyword>
<keyword id="KW-0813">Transport</keyword>
<keyword id="KW-0833">Ubl conjugation pathway</keyword>
<sequence length="174" mass="18831">MDSPSPENPSGTESPNPKSPQTTGTRLSHRPASRQKPALDSNTRSAPIPDDEHGADLPITMSASVVLSSLPRDAHRALADAEAVDTGKVTVRFQPLPSAPILKNRVFKISASQKFETVVKFLRKKLDCKDTDSVFCYVNSVFAPGLDEGVGGLWRCFKTDDQLIVSYSMTPAFG</sequence>
<comment type="function">
    <text evidence="1">Ubiquitin-like protein involved in cytoplasm to vacuole transport (Cvt), autophagy vesicles formation, mitophagy, and nucleophagy. Conjugation with atg5 through a ubiquitin-like conjugating system involving also atg7 as an E1-like activating enzyme and atg10 as an E2-like conjugating enzyme, is essential for its function. The atg12-atg5 conjugate functions as an E3-like enzyme which is required for lipidation of atg8 and atg8 association to the vesicle membranes (By similarity).</text>
</comment>
<comment type="subunit">
    <text evidence="1">Forms a conjugate with atg5.</text>
</comment>
<comment type="subcellular location">
    <subcellularLocation>
        <location evidence="1">Preautophagosomal structure membrane</location>
        <topology evidence="1">Peripheral membrane protein</topology>
    </subcellularLocation>
</comment>
<comment type="similarity">
    <text evidence="3">Belongs to the ATG12 family.</text>
</comment>
<name>ATG12_ASPFU</name>
<proteinExistence type="inferred from homology"/>
<evidence type="ECO:0000250" key="1"/>
<evidence type="ECO:0000256" key="2">
    <source>
        <dbReference type="SAM" id="MobiDB-lite"/>
    </source>
</evidence>
<evidence type="ECO:0000305" key="3"/>
<accession>A4D9P4</accession>
<dbReference type="EMBL" id="AAHF01000006">
    <property type="protein sequence ID" value="EBA27356.1"/>
    <property type="molecule type" value="Genomic_DNA"/>
</dbReference>
<dbReference type="RefSeq" id="XP_001481461.1">
    <property type="nucleotide sequence ID" value="XM_001481411.1"/>
</dbReference>
<dbReference type="SMR" id="A4D9P4"/>
<dbReference type="STRING" id="330879.A4D9P4"/>
<dbReference type="EnsemblFungi" id="EBA27356">
    <property type="protein sequence ID" value="EBA27356"/>
    <property type="gene ID" value="AFUA_6G09165"/>
</dbReference>
<dbReference type="GeneID" id="5077217"/>
<dbReference type="KEGG" id="afm:AFUA_6G09165"/>
<dbReference type="VEuPathDB" id="FungiDB:Afu6g09165"/>
<dbReference type="eggNOG" id="KOG3439">
    <property type="taxonomic scope" value="Eukaryota"/>
</dbReference>
<dbReference type="HOGENOM" id="CLU_106795_1_2_1"/>
<dbReference type="InParanoid" id="A4D9P4"/>
<dbReference type="OMA" id="DLPMNMS"/>
<dbReference type="OrthoDB" id="10003551at2759"/>
<dbReference type="Proteomes" id="UP000002530">
    <property type="component" value="Chromosome 6"/>
</dbReference>
<dbReference type="GO" id="GO:0034274">
    <property type="term" value="C:Atg12-Atg5-Atg16 complex"/>
    <property type="evidence" value="ECO:0000318"/>
    <property type="project" value="GO_Central"/>
</dbReference>
<dbReference type="GO" id="GO:0000421">
    <property type="term" value="C:autophagosome membrane"/>
    <property type="evidence" value="ECO:0000318"/>
    <property type="project" value="GO_Central"/>
</dbReference>
<dbReference type="GO" id="GO:0034045">
    <property type="term" value="C:phagophore assembly site membrane"/>
    <property type="evidence" value="ECO:0000318"/>
    <property type="project" value="GO_Central"/>
</dbReference>
<dbReference type="GO" id="GO:0031386">
    <property type="term" value="F:protein tag activity"/>
    <property type="evidence" value="ECO:0000318"/>
    <property type="project" value="GO_Central"/>
</dbReference>
<dbReference type="GO" id="GO:0000045">
    <property type="term" value="P:autophagosome assembly"/>
    <property type="evidence" value="ECO:0000318"/>
    <property type="project" value="GO_Central"/>
</dbReference>
<dbReference type="GO" id="GO:0097352">
    <property type="term" value="P:autophagosome maturation"/>
    <property type="evidence" value="ECO:0000318"/>
    <property type="project" value="GO_Central"/>
</dbReference>
<dbReference type="GO" id="GO:0000422">
    <property type="term" value="P:autophagy of mitochondrion"/>
    <property type="evidence" value="ECO:0000318"/>
    <property type="project" value="GO_Central"/>
</dbReference>
<dbReference type="GO" id="GO:0061723">
    <property type="term" value="P:glycophagy"/>
    <property type="evidence" value="ECO:0000318"/>
    <property type="project" value="GO_Central"/>
</dbReference>
<dbReference type="GO" id="GO:0034727">
    <property type="term" value="P:piecemeal microautophagy of the nucleus"/>
    <property type="evidence" value="ECO:0000318"/>
    <property type="project" value="GO_Central"/>
</dbReference>
<dbReference type="GO" id="GO:0015031">
    <property type="term" value="P:protein transport"/>
    <property type="evidence" value="ECO:0007669"/>
    <property type="project" value="UniProtKB-KW"/>
</dbReference>
<dbReference type="CDD" id="cd01612">
    <property type="entry name" value="Ubl_ATG12"/>
    <property type="match status" value="1"/>
</dbReference>
<dbReference type="FunFam" id="3.10.20.90:FF:000148">
    <property type="entry name" value="Ubiquitin-like protein ATG12"/>
    <property type="match status" value="1"/>
</dbReference>
<dbReference type="Gene3D" id="3.10.20.90">
    <property type="entry name" value="Phosphatidylinositol 3-kinase Catalytic Subunit, Chain A, domain 1"/>
    <property type="match status" value="1"/>
</dbReference>
<dbReference type="InterPro" id="IPR007242">
    <property type="entry name" value="Atg12"/>
</dbReference>
<dbReference type="InterPro" id="IPR029071">
    <property type="entry name" value="Ubiquitin-like_domsf"/>
</dbReference>
<dbReference type="PANTHER" id="PTHR13385">
    <property type="entry name" value="AUTOPHAGY PROTEIN 12"/>
    <property type="match status" value="1"/>
</dbReference>
<dbReference type="PANTHER" id="PTHR13385:SF0">
    <property type="entry name" value="UBIQUITIN-LIKE PROTEIN ATG12"/>
    <property type="match status" value="1"/>
</dbReference>
<dbReference type="Pfam" id="PF04110">
    <property type="entry name" value="APG12"/>
    <property type="match status" value="1"/>
</dbReference>
<dbReference type="SUPFAM" id="SSF54236">
    <property type="entry name" value="Ubiquitin-like"/>
    <property type="match status" value="1"/>
</dbReference>
<reference key="1">
    <citation type="journal article" date="2005" name="Nature">
        <title>Genomic sequence of the pathogenic and allergenic filamentous fungus Aspergillus fumigatus.</title>
        <authorList>
            <person name="Nierman W.C."/>
            <person name="Pain A."/>
            <person name="Anderson M.J."/>
            <person name="Wortman J.R."/>
            <person name="Kim H.S."/>
            <person name="Arroyo J."/>
            <person name="Berriman M."/>
            <person name="Abe K."/>
            <person name="Archer D.B."/>
            <person name="Bermejo C."/>
            <person name="Bennett J.W."/>
            <person name="Bowyer P."/>
            <person name="Chen D."/>
            <person name="Collins M."/>
            <person name="Coulsen R."/>
            <person name="Davies R."/>
            <person name="Dyer P.S."/>
            <person name="Farman M.L."/>
            <person name="Fedorova N."/>
            <person name="Fedorova N.D."/>
            <person name="Feldblyum T.V."/>
            <person name="Fischer R."/>
            <person name="Fosker N."/>
            <person name="Fraser A."/>
            <person name="Garcia J.L."/>
            <person name="Garcia M.J."/>
            <person name="Goble A."/>
            <person name="Goldman G.H."/>
            <person name="Gomi K."/>
            <person name="Griffith-Jones S."/>
            <person name="Gwilliam R."/>
            <person name="Haas B.J."/>
            <person name="Haas H."/>
            <person name="Harris D.E."/>
            <person name="Horiuchi H."/>
            <person name="Huang J."/>
            <person name="Humphray S."/>
            <person name="Jimenez J."/>
            <person name="Keller N."/>
            <person name="Khouri H."/>
            <person name="Kitamoto K."/>
            <person name="Kobayashi T."/>
            <person name="Konzack S."/>
            <person name="Kulkarni R."/>
            <person name="Kumagai T."/>
            <person name="Lafton A."/>
            <person name="Latge J.-P."/>
            <person name="Li W."/>
            <person name="Lord A."/>
            <person name="Lu C."/>
            <person name="Majoros W.H."/>
            <person name="May G.S."/>
            <person name="Miller B.L."/>
            <person name="Mohamoud Y."/>
            <person name="Molina M."/>
            <person name="Monod M."/>
            <person name="Mouyna I."/>
            <person name="Mulligan S."/>
            <person name="Murphy L.D."/>
            <person name="O'Neil S."/>
            <person name="Paulsen I."/>
            <person name="Penalva M.A."/>
            <person name="Pertea M."/>
            <person name="Price C."/>
            <person name="Pritchard B.L."/>
            <person name="Quail M.A."/>
            <person name="Rabbinowitsch E."/>
            <person name="Rawlins N."/>
            <person name="Rajandream M.A."/>
            <person name="Reichard U."/>
            <person name="Renauld H."/>
            <person name="Robson G.D."/>
            <person name="Rodriguez de Cordoba S."/>
            <person name="Rodriguez-Pena J.M."/>
            <person name="Ronning C.M."/>
            <person name="Rutter S."/>
            <person name="Salzberg S.L."/>
            <person name="Sanchez M."/>
            <person name="Sanchez-Ferrero J.C."/>
            <person name="Saunders D."/>
            <person name="Seeger K."/>
            <person name="Squares R."/>
            <person name="Squares S."/>
            <person name="Takeuchi M."/>
            <person name="Tekaia F."/>
            <person name="Turner G."/>
            <person name="Vazquez de Aldana C.R."/>
            <person name="Weidman J."/>
            <person name="White O."/>
            <person name="Woodward J.R."/>
            <person name="Yu J.-H."/>
            <person name="Fraser C.M."/>
            <person name="Galagan J.E."/>
            <person name="Asai K."/>
            <person name="Machida M."/>
            <person name="Hall N."/>
            <person name="Barrell B.G."/>
            <person name="Denning D.W."/>
        </authorList>
    </citation>
    <scope>NUCLEOTIDE SEQUENCE [LARGE SCALE GENOMIC DNA]</scope>
    <source>
        <strain>ATCC MYA-4609 / CBS 101355 / FGSC A1100 / Af293</strain>
    </source>
</reference>
<protein>
    <recommendedName>
        <fullName>Ubiquitin-like protein ATG12</fullName>
    </recommendedName>
    <alternativeName>
        <fullName>Autophagy-related protein 12</fullName>
    </alternativeName>
</protein>
<gene>
    <name type="primary">atg12</name>
    <name type="ORF">AFUA_6G09165</name>
</gene>
<feature type="chain" id="PRO_0000317930" description="Ubiquitin-like protein ATG12">
    <location>
        <begin position="1"/>
        <end position="174"/>
    </location>
</feature>
<feature type="region of interest" description="Disordered" evidence="2">
    <location>
        <begin position="1"/>
        <end position="56"/>
    </location>
</feature>
<feature type="compositionally biased region" description="Polar residues" evidence="2">
    <location>
        <begin position="8"/>
        <end position="26"/>
    </location>
</feature>
<feature type="cross-link" description="Glycyl lysine isopeptide (Gly-Lys) (interchain with K-163 in atg5)" evidence="1">
    <location>
        <position position="174"/>
    </location>
</feature>